<protein>
    <recommendedName>
        <fullName>Coiled-coil domain-containing protein 80</fullName>
    </recommendedName>
    <alternativeName>
        <fullName>Down-regulated by oncogenes 1 protein</fullName>
    </alternativeName>
    <alternativeName>
        <fullName>Steroid-sensitive gene 1 protein</fullName>
        <shortName>SSG-1</shortName>
    </alternativeName>
</protein>
<proteinExistence type="evidence at protein level"/>
<reference key="1">
    <citation type="journal article" date="2001" name="Endocrinology">
        <title>Cloning and characterization of a novel gene that is regulated by estrogen and is associated with mammary gland carcinogenesis.</title>
        <authorList>
            <person name="Marcantonio D."/>
            <person name="Chalifour L.E."/>
            <person name="Alaoui-Jamali M.A."/>
            <person name="Alpert L."/>
            <person name="Huynh H.T."/>
        </authorList>
    </citation>
    <scope>NUCLEOTIDE SEQUENCE [MRNA]</scope>
    <scope>SUBCELLULAR LOCATION</scope>
    <scope>INDUCTION</scope>
    <scope>TISSUE SPECIFICITY</scope>
    <source>
        <tissue>Uterus</tissue>
    </source>
</reference>
<reference key="2">
    <citation type="journal article" date="2005" name="J. Biol. Chem.">
        <title>DRO1, a gene down-regulated by oncogenes, mediates growth inhibition in colon and pancreatic cancer cells.</title>
        <authorList>
            <person name="Bommer G.T."/>
            <person name="Jaeger C."/>
            <person name="Duerr E.M."/>
            <person name="Baehs S."/>
            <person name="Eichhorst S.T."/>
            <person name="Brabletz T."/>
            <person name="Hu G."/>
            <person name="Froehlich T."/>
            <person name="Arnold G."/>
            <person name="Kress D.C."/>
            <person name="Goeke B."/>
            <person name="Fearon E.R."/>
            <person name="Kolligs F.T."/>
        </authorList>
    </citation>
    <scope>NUCLEOTIDE SEQUENCE [MRNA]</scope>
    <scope>TISSUE SPECIFICITY</scope>
    <scope>INDUCTION</scope>
    <source>
        <strain>Sprague-Dawley</strain>
    </source>
</reference>
<reference key="3">
    <citation type="journal article" date="2004" name="Genome Res.">
        <title>The status, quality, and expansion of the NIH full-length cDNA project: the Mammalian Gene Collection (MGC).</title>
        <authorList>
            <consortium name="The MGC Project Team"/>
        </authorList>
    </citation>
    <scope>NUCLEOTIDE SEQUENCE [LARGE SCALE MRNA] OF 93-949</scope>
    <source>
        <tissue>Lung</tissue>
    </source>
</reference>
<reference key="4">
    <citation type="journal article" date="2015" name="J. Proteome Res.">
        <title>Peptidomics for studying limited proteolysis.</title>
        <authorList>
            <person name="Tsuchiya T."/>
            <person name="Osaki T."/>
            <person name="Minamino N."/>
            <person name="Sasaki K."/>
        </authorList>
    </citation>
    <scope>CLEAVAGE OF SIGNAL PEPTIDE AFTER ALA-27</scope>
    <scope>IDENTIFICATION BY MASS SPECTROMETRY</scope>
</reference>
<keyword id="KW-0175">Coiled coil</keyword>
<keyword id="KW-0272">Extracellular matrix</keyword>
<keyword id="KW-0325">Glycoprotein</keyword>
<keyword id="KW-1017">Isopeptide bond</keyword>
<keyword id="KW-0597">Phosphoprotein</keyword>
<keyword id="KW-1185">Reference proteome</keyword>
<keyword id="KW-0964">Secreted</keyword>
<keyword id="KW-0732">Signal</keyword>
<keyword id="KW-0832">Ubl conjugation</keyword>
<dbReference type="EMBL" id="AF223677">
    <property type="protein sequence ID" value="AAF35351.1"/>
    <property type="status" value="ALT_FRAME"/>
    <property type="molecule type" value="mRNA"/>
</dbReference>
<dbReference type="EMBL" id="AY548105">
    <property type="protein sequence ID" value="AAS66670.1"/>
    <property type="molecule type" value="mRNA"/>
</dbReference>
<dbReference type="EMBL" id="BC070926">
    <property type="protein sequence ID" value="AAH70926.1"/>
    <property type="molecule type" value="mRNA"/>
</dbReference>
<dbReference type="RefSeq" id="NP_071988.2">
    <property type="nucleotide sequence ID" value="NM_022543.2"/>
</dbReference>
<dbReference type="FunCoup" id="Q6QD51">
    <property type="interactions" value="507"/>
</dbReference>
<dbReference type="STRING" id="10116.ENSRNOP00000056490"/>
<dbReference type="CarbonylDB" id="Q6QD51"/>
<dbReference type="GlyCosmos" id="Q6QD51">
    <property type="glycosylation" value="1 site, No reported glycans"/>
</dbReference>
<dbReference type="GlyGen" id="Q6QD51">
    <property type="glycosylation" value="2 sites"/>
</dbReference>
<dbReference type="PhosphoSitePlus" id="Q6QD51"/>
<dbReference type="PaxDb" id="10116-ENSRNOP00000056490"/>
<dbReference type="Ensembl" id="ENSRNOT00000059735.4">
    <property type="protein sequence ID" value="ENSRNOP00000056490.2"/>
    <property type="gene ID" value="ENSRNOG00000002052.7"/>
</dbReference>
<dbReference type="GeneID" id="64387"/>
<dbReference type="KEGG" id="rno:64387"/>
<dbReference type="UCSC" id="RGD:69421">
    <property type="organism name" value="rat"/>
</dbReference>
<dbReference type="AGR" id="RGD:69421"/>
<dbReference type="CTD" id="151887"/>
<dbReference type="RGD" id="69421">
    <property type="gene designation" value="Ccdc80"/>
</dbReference>
<dbReference type="eggNOG" id="ENOG502QRG7">
    <property type="taxonomic scope" value="Eukaryota"/>
</dbReference>
<dbReference type="GeneTree" id="ENSGT00940000161699"/>
<dbReference type="HOGENOM" id="CLU_013508_0_0_1"/>
<dbReference type="InParanoid" id="Q6QD51"/>
<dbReference type="OMA" id="DMRVKQY"/>
<dbReference type="OrthoDB" id="9898686at2759"/>
<dbReference type="PhylomeDB" id="Q6QD51"/>
<dbReference type="TreeFam" id="TF332926"/>
<dbReference type="PRO" id="PR:Q6QD51"/>
<dbReference type="Proteomes" id="UP000002494">
    <property type="component" value="Chromosome 11"/>
</dbReference>
<dbReference type="Bgee" id="ENSRNOG00000002052">
    <property type="expression patterns" value="Expressed in esophagus and 19 other cell types or tissues"/>
</dbReference>
<dbReference type="GO" id="GO:0005604">
    <property type="term" value="C:basement membrane"/>
    <property type="evidence" value="ECO:0000266"/>
    <property type="project" value="RGD"/>
</dbReference>
<dbReference type="GO" id="GO:0031012">
    <property type="term" value="C:extracellular matrix"/>
    <property type="evidence" value="ECO:0000266"/>
    <property type="project" value="RGD"/>
</dbReference>
<dbReference type="GO" id="GO:0005576">
    <property type="term" value="C:extracellular region"/>
    <property type="evidence" value="ECO:0007669"/>
    <property type="project" value="UniProtKB-KW"/>
</dbReference>
<dbReference type="GO" id="GO:0005614">
    <property type="term" value="C:interstitial matrix"/>
    <property type="evidence" value="ECO:0000266"/>
    <property type="project" value="RGD"/>
</dbReference>
<dbReference type="GO" id="GO:0001968">
    <property type="term" value="F:fibronectin binding"/>
    <property type="evidence" value="ECO:0000266"/>
    <property type="project" value="RGD"/>
</dbReference>
<dbReference type="GO" id="GO:0005539">
    <property type="term" value="F:glycosaminoglycan binding"/>
    <property type="evidence" value="ECO:0000266"/>
    <property type="project" value="RGD"/>
</dbReference>
<dbReference type="GO" id="GO:0008201">
    <property type="term" value="F:heparin binding"/>
    <property type="evidence" value="ECO:0000266"/>
    <property type="project" value="RGD"/>
</dbReference>
<dbReference type="GO" id="GO:0030198">
    <property type="term" value="P:extracellular matrix organization"/>
    <property type="evidence" value="ECO:0000266"/>
    <property type="project" value="RGD"/>
</dbReference>
<dbReference type="GO" id="GO:0010811">
    <property type="term" value="P:positive regulation of cell-substrate adhesion"/>
    <property type="evidence" value="ECO:0000266"/>
    <property type="project" value="RGD"/>
</dbReference>
<dbReference type="GO" id="GO:0009617">
    <property type="term" value="P:response to bacterium"/>
    <property type="evidence" value="ECO:0000266"/>
    <property type="project" value="RGD"/>
</dbReference>
<dbReference type="InterPro" id="IPR025232">
    <property type="entry name" value="DUF4174"/>
</dbReference>
<dbReference type="PANTHER" id="PTHR46792">
    <property type="entry name" value="COILED-COIL DOMAIN-CONTAINING PROTEIN 80"/>
    <property type="match status" value="1"/>
</dbReference>
<dbReference type="PANTHER" id="PTHR46792:SF2">
    <property type="entry name" value="COILED-COIL DOMAIN-CONTAINING PROTEIN 80"/>
    <property type="match status" value="1"/>
</dbReference>
<dbReference type="Pfam" id="PF13778">
    <property type="entry name" value="DUF4174"/>
    <property type="match status" value="3"/>
</dbReference>
<evidence type="ECO:0000250" key="1"/>
<evidence type="ECO:0000250" key="2">
    <source>
        <dbReference type="UniProtKB" id="Q76M96"/>
    </source>
</evidence>
<evidence type="ECO:0000255" key="3"/>
<evidence type="ECO:0000256" key="4">
    <source>
        <dbReference type="SAM" id="MobiDB-lite"/>
    </source>
</evidence>
<evidence type="ECO:0000269" key="5">
    <source>
    </source>
</evidence>
<evidence type="ECO:0000269" key="6">
    <source>
    </source>
</evidence>
<evidence type="ECO:0000269" key="7">
    <source>
    </source>
</evidence>
<evidence type="ECO:0000305" key="8"/>
<name>CCD80_RAT</name>
<organism>
    <name type="scientific">Rattus norvegicus</name>
    <name type="common">Rat</name>
    <dbReference type="NCBI Taxonomy" id="10116"/>
    <lineage>
        <taxon>Eukaryota</taxon>
        <taxon>Metazoa</taxon>
        <taxon>Chordata</taxon>
        <taxon>Craniata</taxon>
        <taxon>Vertebrata</taxon>
        <taxon>Euteleostomi</taxon>
        <taxon>Mammalia</taxon>
        <taxon>Eutheria</taxon>
        <taxon>Euarchontoglires</taxon>
        <taxon>Glires</taxon>
        <taxon>Rodentia</taxon>
        <taxon>Myomorpha</taxon>
        <taxon>Muroidea</taxon>
        <taxon>Muridae</taxon>
        <taxon>Murinae</taxon>
        <taxon>Rattus</taxon>
    </lineage>
</organism>
<feature type="signal peptide" evidence="7">
    <location>
        <begin position="1"/>
        <end position="27"/>
    </location>
</feature>
<feature type="chain" id="PRO_0000282420" description="Coiled-coil domain-containing protein 80">
    <location>
        <begin position="28"/>
        <end position="949"/>
    </location>
</feature>
<feature type="region of interest" description="Disordered" evidence="4">
    <location>
        <begin position="24"/>
        <end position="79"/>
    </location>
</feature>
<feature type="region of interest" description="Disordered" evidence="4">
    <location>
        <begin position="289"/>
        <end position="360"/>
    </location>
</feature>
<feature type="region of interest" description="Disordered" evidence="4">
    <location>
        <begin position="408"/>
        <end position="609"/>
    </location>
</feature>
<feature type="coiled-coil region" evidence="3">
    <location>
        <begin position="559"/>
        <end position="587"/>
    </location>
</feature>
<feature type="compositionally biased region" description="Gly residues" evidence="4">
    <location>
        <begin position="295"/>
        <end position="305"/>
    </location>
</feature>
<feature type="compositionally biased region" description="Basic and acidic residues" evidence="4">
    <location>
        <begin position="308"/>
        <end position="328"/>
    </location>
</feature>
<feature type="compositionally biased region" description="Low complexity" evidence="4">
    <location>
        <begin position="345"/>
        <end position="360"/>
    </location>
</feature>
<feature type="compositionally biased region" description="Basic and acidic residues" evidence="4">
    <location>
        <begin position="419"/>
        <end position="429"/>
    </location>
</feature>
<feature type="compositionally biased region" description="Polar residues" evidence="4">
    <location>
        <begin position="436"/>
        <end position="453"/>
    </location>
</feature>
<feature type="compositionally biased region" description="Basic and acidic residues" evidence="4">
    <location>
        <begin position="463"/>
        <end position="477"/>
    </location>
</feature>
<feature type="compositionally biased region" description="Basic residues" evidence="4">
    <location>
        <begin position="487"/>
        <end position="498"/>
    </location>
</feature>
<feature type="compositionally biased region" description="Basic and acidic residues" evidence="4">
    <location>
        <begin position="499"/>
        <end position="511"/>
    </location>
</feature>
<feature type="compositionally biased region" description="Basic and acidic residues" evidence="4">
    <location>
        <begin position="534"/>
        <end position="548"/>
    </location>
</feature>
<feature type="compositionally biased region" description="Basic and acidic residues" evidence="4">
    <location>
        <begin position="556"/>
        <end position="581"/>
    </location>
</feature>
<feature type="glycosylation site" description="N-linked (GlcNAc...) asparagine" evidence="3">
    <location>
        <position position="467"/>
    </location>
</feature>
<feature type="cross-link" description="Glycyl lysine isopeptide (Lys-Gly) (interchain with G-Cter in SUMO2)" evidence="2">
    <location>
        <position position="544"/>
    </location>
</feature>
<feature type="cross-link" description="Glycyl lysine isopeptide (Lys-Gly) (interchain with G-Cter in SUMO2)" evidence="2">
    <location>
        <position position="547"/>
    </location>
</feature>
<feature type="sequence conflict" description="In Ref. 1; AAF35351." evidence="8" ref="1">
    <original>M</original>
    <variation>L</variation>
    <location>
        <position position="129"/>
    </location>
</feature>
<feature type="sequence conflict" description="In Ref. 1; AAF35351." evidence="8" ref="1">
    <original>A</original>
    <variation>P</variation>
    <location>
        <position position="156"/>
    </location>
</feature>
<feature type="sequence conflict" description="In Ref. 1; AAF35351." evidence="8" ref="1">
    <original>Y</original>
    <variation>S</variation>
    <location>
        <position position="164"/>
    </location>
</feature>
<feature type="sequence conflict" description="In Ref. 1; AAF35351." evidence="8" ref="1">
    <original>GEE</original>
    <variation>FV</variation>
    <location>
        <begin position="194"/>
        <end position="196"/>
    </location>
</feature>
<feature type="sequence conflict" description="In Ref. 1; AAF35351." evidence="8" ref="1">
    <original>T</original>
    <variation>S</variation>
    <location>
        <position position="241"/>
    </location>
</feature>
<feature type="sequence conflict" description="In Ref. 1; AAF35351." evidence="8" ref="1">
    <original>Y</original>
    <variation>F</variation>
    <location>
        <position position="258"/>
    </location>
</feature>
<feature type="sequence conflict" description="In Ref. 1; AAF35351." evidence="8" ref="1">
    <location>
        <position position="280"/>
    </location>
</feature>
<feature type="sequence conflict" description="In Ref. 1; AAF35351." evidence="8" ref="1">
    <original>D</original>
    <variation>G</variation>
    <location>
        <position position="719"/>
    </location>
</feature>
<feature type="sequence conflict" description="In Ref. 1; AAF35351." evidence="8" ref="1">
    <original>S</original>
    <variation>P</variation>
    <location>
        <position position="884"/>
    </location>
</feature>
<feature type="sequence conflict" description="In Ref. 1; AAF35351." evidence="8" ref="1">
    <original>L</original>
    <variation>P</variation>
    <location>
        <position position="897"/>
    </location>
</feature>
<accession>Q6QD51</accession>
<accession>Q6IRG8</accession>
<accession>Q9JKW4</accession>
<gene>
    <name type="primary">Ccdc80</name>
    <name type="synonym">Dro1</name>
    <name type="synonym">Ssg1</name>
</gene>
<comment type="function">
    <text evidence="1">Promotes cell adhesion and matrix assembly.</text>
</comment>
<comment type="subunit">
    <text evidence="1">Binds to various extracellular matrix proteins.</text>
</comment>
<comment type="subcellular location">
    <subcellularLocation>
        <location evidence="1">Secreted</location>
        <location evidence="1">Extracellular space</location>
        <location evidence="1">Extracellular matrix</location>
    </subcellularLocation>
    <text evidence="5">Isoform 2: Cytoplasm.</text>
</comment>
<comment type="tissue specificity">
    <text evidence="5 6">Isoform 2 is expressed in uterus, liver, lung, spleen, kidney, heart, bladder, skeletal muscle and brain (at protein level). Isoform 2 is expressed very low in mammary gland and intestine (at protein level). Isoform 2 is expressed in lactating mammary glands and mammary tumors (at protein level). Ubiquitous (isoform 1). Isoform 2 is expressed in ovary, uterus, mammary glands, liver, lung, spleen, kidney, heart, bladder, intestine, skeletal muscle and brain.</text>
</comment>
<comment type="induction">
    <text evidence="5 6">Down-regulated by oncogenes (isoform 1). Isoform 2 is down-regulated by beta estradiol in mammary gland (at mRNA level). Isoform 2 is up-regulated by beta estradiol in mammary glands (at protein level). Up-regulated in lactating mammary glands and mammary tumors (at protein level).</text>
</comment>
<comment type="PTM">
    <text evidence="1">Phosphorylated.</text>
</comment>
<comment type="similarity">
    <text evidence="8">Belongs to the CCDC80 family.</text>
</comment>
<comment type="sequence caution" evidence="8">
    <conflict type="frameshift">
        <sequence resource="EMBL-CDS" id="AAF35351"/>
    </conflict>
</comment>
<sequence length="949" mass="107691">MTWKMGPHFTMLLAMWLVCGSASQSSALDSDGRPGRKVPLASPISSRSARYLRHTGRSGGVEKSTQEEPNPQSFQRRKSVPVLRLAHPTVRPPPSGINGAPVRPELKPIARGSASEMVRDEGSSARTRMLRFPSGSSSPNILASFAGKNRVWVISAPHASEGYYRLMMSLLKDDVYCELAERHIQQIVLFHQAGEEGGKVRRITSEGQILEQPLDPNLIPKLMSFLKLEKGKFSMVLLKKTLQVEERYPYPVRLEAMYEVIDQGPIRRIEKIRQKGFVQKCKASGIEGHVVQEGNNGGGGGGSTGLGSDKRKEDPRRTQIHPTREPPRKQTTTKAATPQPPPTPRATTLPPAPVTTATRATSRVVTVAARPTTTTAYPATQRPWTSRLHPFSVSHRPPATAEMTTVRGPSVSEQLYPLPRKEQQREKPQATRRPNKATNYGSFTATPPTTLWEGSTRAVGTSRFRDNRTDKREHGHQDPNVVPGPHKPIKGKLPKKKEKILSNEYEAKYDLSRPTTSQGEEELQVDNIPSQNAKESKKHEKPEKPEKEKKKKGKSAKPDKLLRSEKQMKKAEKKSKQEKEKTKKKKAGKTEQDDYQKPTAKHLAPSPRKSVADLLGSFEGKRRLLLITTPKAENNMYVQQRDEYLESFCKMATRRISVVTIFGPVNNSSMKIDHFQLDNEKPMRVVDDEDLVDQHLISELRKEYGMTYNDFFMVLTDVDLRVKQYYEVPIAMKSVFDLIDTFQSRIKDMEKQKKEGITCKEDKRQSLENFLSRFRWRRRLLVISAPNDEDWAYSQQLSALNGQACNFGLRHITILKLLGVGEEVGGILELFPINGSSTVEREDVPAHLVKDIRNYFQVSPEYFSMLLVGKDGNVKSWYPSPMWSMVIVYDLIDSMQLRRQEMAIQQSLGMRCPEDEYAGYGYHSYHQGYQDGYQDDYRHHESYHHGYPY</sequence>